<reference key="1">
    <citation type="submission" date="2007-02" db="EMBL/GenBank/DDBJ databases">
        <title>Complete sequence of plasmid pRSPH01 of Rhodobacter sphaeroides ATCC 17029.</title>
        <authorList>
            <person name="Copeland A."/>
            <person name="Lucas S."/>
            <person name="Lapidus A."/>
            <person name="Barry K."/>
            <person name="Detter J.C."/>
            <person name="Glavina del Rio T."/>
            <person name="Hammon N."/>
            <person name="Israni S."/>
            <person name="Dalin E."/>
            <person name="Tice H."/>
            <person name="Pitluck S."/>
            <person name="Kiss H."/>
            <person name="Brettin T."/>
            <person name="Bruce D."/>
            <person name="Han C."/>
            <person name="Tapia R."/>
            <person name="Gilna P."/>
            <person name="Schmutz J."/>
            <person name="Larimer F."/>
            <person name="Land M."/>
            <person name="Hauser L."/>
            <person name="Kyrpides N."/>
            <person name="Mikhailova N."/>
            <person name="Richardson P."/>
            <person name="Mackenzie C."/>
            <person name="Choudhary M."/>
            <person name="Donohue T.J."/>
            <person name="Kaplan S."/>
        </authorList>
    </citation>
    <scope>NUCLEOTIDE SEQUENCE [LARGE SCALE GENOMIC DNA]</scope>
    <source>
        <strain>ATCC 17029 / ATH 2.4.9</strain>
    </source>
</reference>
<organism>
    <name type="scientific">Cereibacter sphaeroides (strain ATCC 17029 / ATH 2.4.9)</name>
    <name type="common">Rhodobacter sphaeroides</name>
    <dbReference type="NCBI Taxonomy" id="349101"/>
    <lineage>
        <taxon>Bacteria</taxon>
        <taxon>Pseudomonadati</taxon>
        <taxon>Pseudomonadota</taxon>
        <taxon>Alphaproteobacteria</taxon>
        <taxon>Rhodobacterales</taxon>
        <taxon>Paracoccaceae</taxon>
        <taxon>Cereibacter</taxon>
    </lineage>
</organism>
<geneLocation type="plasmid">
    <name>pRSPH01</name>
</geneLocation>
<name>ATPB2_CERS1</name>
<evidence type="ECO:0000255" key="1">
    <source>
        <dbReference type="HAMAP-Rule" id="MF_01347"/>
    </source>
</evidence>
<sequence length="464" mass="48916">MTGRVTSVRGPVLDIRVEGPLPAIGDVVEVGSLPVVAEIQAHLGAADVRAIALHSTQGIARGETVRTTGGPLRVPTGPAVLGRLLDVAGRPADLGPPIPAEAPRAPILHPAPPLAAQDARFQVFSTGIKVLDLLAPLAQGGKTAMFGGAGVGKTVLVMELIRAMVSGYDGISVFAGVGERSREGHEMLGEMKASGVLDRTVLVYGQMNEPPGARWRVPLTALTIAEGFRDGEGRNVLLLIDNVFRFVQAGAEVSGLLGRMPSRVGYQPTLETEVAALQERIASVGRASVTAIEAVYVPADDFTDPAVTAISAHVDSTVVLSRQLAAEGIYPAIDPLATTSVLLDPAVVGEEHARVAGRLKEAIEHYHELRDVIALLGIEELGREEQLMVGRARKLQRFLTQPFFVAAAYTGMEGRSVPVAETVQGCAAILAGECDDWDEGSLYMIGTLAEARAREEARRRKGAA</sequence>
<proteinExistence type="inferred from homology"/>
<accession>A3PS59</accession>
<gene>
    <name evidence="1" type="primary">atpD2</name>
    <name type="ordered locus">Rsph17029_4097</name>
</gene>
<dbReference type="EC" id="7.1.2.2" evidence="1"/>
<dbReference type="EMBL" id="CP000579">
    <property type="protein sequence ID" value="ABN79175.1"/>
    <property type="molecule type" value="Genomic_DNA"/>
</dbReference>
<dbReference type="RefSeq" id="WP_011840044.1">
    <property type="nucleotide sequence ID" value="NC_009040.1"/>
</dbReference>
<dbReference type="SMR" id="A3PS59"/>
<dbReference type="KEGG" id="rsh:Rsph17029_4097"/>
<dbReference type="HOGENOM" id="CLU_022398_0_2_5"/>
<dbReference type="GO" id="GO:0005886">
    <property type="term" value="C:plasma membrane"/>
    <property type="evidence" value="ECO:0007669"/>
    <property type="project" value="UniProtKB-SubCell"/>
</dbReference>
<dbReference type="GO" id="GO:0045259">
    <property type="term" value="C:proton-transporting ATP synthase complex"/>
    <property type="evidence" value="ECO:0007669"/>
    <property type="project" value="UniProtKB-KW"/>
</dbReference>
<dbReference type="GO" id="GO:0005524">
    <property type="term" value="F:ATP binding"/>
    <property type="evidence" value="ECO:0007669"/>
    <property type="project" value="UniProtKB-UniRule"/>
</dbReference>
<dbReference type="GO" id="GO:0016887">
    <property type="term" value="F:ATP hydrolysis activity"/>
    <property type="evidence" value="ECO:0007669"/>
    <property type="project" value="InterPro"/>
</dbReference>
<dbReference type="GO" id="GO:0046933">
    <property type="term" value="F:proton-transporting ATP synthase activity, rotational mechanism"/>
    <property type="evidence" value="ECO:0007669"/>
    <property type="project" value="UniProtKB-UniRule"/>
</dbReference>
<dbReference type="CDD" id="cd18110">
    <property type="entry name" value="ATP-synt_F1_beta_C"/>
    <property type="match status" value="1"/>
</dbReference>
<dbReference type="CDD" id="cd18115">
    <property type="entry name" value="ATP-synt_F1_beta_N"/>
    <property type="match status" value="1"/>
</dbReference>
<dbReference type="CDD" id="cd01133">
    <property type="entry name" value="F1-ATPase_beta_CD"/>
    <property type="match status" value="1"/>
</dbReference>
<dbReference type="Gene3D" id="2.40.10.170">
    <property type="match status" value="1"/>
</dbReference>
<dbReference type="Gene3D" id="1.10.1140.10">
    <property type="entry name" value="Bovine Mitochondrial F1-atpase, Atp Synthase Beta Chain, Chain D, domain 3"/>
    <property type="match status" value="1"/>
</dbReference>
<dbReference type="Gene3D" id="3.40.50.300">
    <property type="entry name" value="P-loop containing nucleotide triphosphate hydrolases"/>
    <property type="match status" value="1"/>
</dbReference>
<dbReference type="HAMAP" id="MF_01347">
    <property type="entry name" value="ATP_synth_beta_bact"/>
    <property type="match status" value="1"/>
</dbReference>
<dbReference type="InterPro" id="IPR003593">
    <property type="entry name" value="AAA+_ATPase"/>
</dbReference>
<dbReference type="InterPro" id="IPR055190">
    <property type="entry name" value="ATP-synt_VA_C"/>
</dbReference>
<dbReference type="InterPro" id="IPR005722">
    <property type="entry name" value="ATP_synth_F1_bsu"/>
</dbReference>
<dbReference type="InterPro" id="IPR050053">
    <property type="entry name" value="ATPase_alpha/beta_chains"/>
</dbReference>
<dbReference type="InterPro" id="IPR004100">
    <property type="entry name" value="ATPase_F1/V1/A1_a/bsu_N"/>
</dbReference>
<dbReference type="InterPro" id="IPR036121">
    <property type="entry name" value="ATPase_F1/V1/A1_a/bsu_N_sf"/>
</dbReference>
<dbReference type="InterPro" id="IPR000194">
    <property type="entry name" value="ATPase_F1/V1/A1_a/bsu_nucl-bd"/>
</dbReference>
<dbReference type="InterPro" id="IPR024034">
    <property type="entry name" value="ATPase_F1/V1_b/a_C"/>
</dbReference>
<dbReference type="InterPro" id="IPR027417">
    <property type="entry name" value="P-loop_NTPase"/>
</dbReference>
<dbReference type="NCBIfam" id="TIGR01039">
    <property type="entry name" value="atpD"/>
    <property type="match status" value="1"/>
</dbReference>
<dbReference type="PANTHER" id="PTHR15184">
    <property type="entry name" value="ATP SYNTHASE"/>
    <property type="match status" value="1"/>
</dbReference>
<dbReference type="PANTHER" id="PTHR15184:SF71">
    <property type="entry name" value="ATP SYNTHASE SUBUNIT BETA, MITOCHONDRIAL"/>
    <property type="match status" value="1"/>
</dbReference>
<dbReference type="Pfam" id="PF00006">
    <property type="entry name" value="ATP-synt_ab"/>
    <property type="match status" value="1"/>
</dbReference>
<dbReference type="Pfam" id="PF02874">
    <property type="entry name" value="ATP-synt_ab_N"/>
    <property type="match status" value="1"/>
</dbReference>
<dbReference type="Pfam" id="PF22919">
    <property type="entry name" value="ATP-synt_VA_C"/>
    <property type="match status" value="1"/>
</dbReference>
<dbReference type="SMART" id="SM00382">
    <property type="entry name" value="AAA"/>
    <property type="match status" value="1"/>
</dbReference>
<dbReference type="SUPFAM" id="SSF47917">
    <property type="entry name" value="C-terminal domain of alpha and beta subunits of F1 ATP synthase"/>
    <property type="match status" value="1"/>
</dbReference>
<dbReference type="SUPFAM" id="SSF50615">
    <property type="entry name" value="N-terminal domain of alpha and beta subunits of F1 ATP synthase"/>
    <property type="match status" value="1"/>
</dbReference>
<dbReference type="SUPFAM" id="SSF52540">
    <property type="entry name" value="P-loop containing nucleoside triphosphate hydrolases"/>
    <property type="match status" value="1"/>
</dbReference>
<feature type="chain" id="PRO_0000339580" description="ATP synthase subunit beta 2">
    <location>
        <begin position="1"/>
        <end position="464"/>
    </location>
</feature>
<feature type="binding site" evidence="1">
    <location>
        <begin position="147"/>
        <end position="154"/>
    </location>
    <ligand>
        <name>ATP</name>
        <dbReference type="ChEBI" id="CHEBI:30616"/>
    </ligand>
</feature>
<comment type="function">
    <text evidence="1">Produces ATP from ADP in the presence of a proton gradient across the membrane. The catalytic sites are hosted primarily by the beta subunits.</text>
</comment>
<comment type="catalytic activity">
    <reaction evidence="1">
        <text>ATP + H2O + 4 H(+)(in) = ADP + phosphate + 5 H(+)(out)</text>
        <dbReference type="Rhea" id="RHEA:57720"/>
        <dbReference type="ChEBI" id="CHEBI:15377"/>
        <dbReference type="ChEBI" id="CHEBI:15378"/>
        <dbReference type="ChEBI" id="CHEBI:30616"/>
        <dbReference type="ChEBI" id="CHEBI:43474"/>
        <dbReference type="ChEBI" id="CHEBI:456216"/>
        <dbReference type="EC" id="7.1.2.2"/>
    </reaction>
</comment>
<comment type="subunit">
    <text evidence="1">F-type ATPases have 2 components, CF(1) - the catalytic core - and CF(0) - the membrane proton channel. CF(1) has five subunits: alpha(3), beta(3), gamma(1), delta(1), epsilon(1). CF(0) has four main subunits: a(1), b(1), b'(1) and c(9-12).</text>
</comment>
<comment type="subcellular location">
    <subcellularLocation>
        <location evidence="1">Cell inner membrane</location>
        <topology evidence="1">Peripheral membrane protein</topology>
    </subcellularLocation>
</comment>
<comment type="similarity">
    <text evidence="1">Belongs to the ATPase alpha/beta chains family.</text>
</comment>
<keyword id="KW-0066">ATP synthesis</keyword>
<keyword id="KW-0067">ATP-binding</keyword>
<keyword id="KW-0997">Cell inner membrane</keyword>
<keyword id="KW-1003">Cell membrane</keyword>
<keyword id="KW-0139">CF(1)</keyword>
<keyword id="KW-0375">Hydrogen ion transport</keyword>
<keyword id="KW-0406">Ion transport</keyword>
<keyword id="KW-0472">Membrane</keyword>
<keyword id="KW-0547">Nucleotide-binding</keyword>
<keyword id="KW-0614">Plasmid</keyword>
<keyword id="KW-1278">Translocase</keyword>
<keyword id="KW-0813">Transport</keyword>
<protein>
    <recommendedName>
        <fullName evidence="1">ATP synthase subunit beta 2</fullName>
        <ecNumber evidence="1">7.1.2.2</ecNumber>
    </recommendedName>
    <alternativeName>
        <fullName evidence="1">ATP synthase F1 sector subunit beta 2</fullName>
    </alternativeName>
    <alternativeName>
        <fullName evidence="1">F-ATPase subunit beta 2</fullName>
    </alternativeName>
</protein>